<evidence type="ECO:0000255" key="1">
    <source>
        <dbReference type="HAMAP-Rule" id="MF_01877"/>
    </source>
</evidence>
<organism>
    <name type="scientific">Rickettsia prowazekii (strain Madrid E)</name>
    <dbReference type="NCBI Taxonomy" id="272947"/>
    <lineage>
        <taxon>Bacteria</taxon>
        <taxon>Pseudomonadati</taxon>
        <taxon>Pseudomonadota</taxon>
        <taxon>Alphaproteobacteria</taxon>
        <taxon>Rickettsiales</taxon>
        <taxon>Rickettsiaceae</taxon>
        <taxon>Rickettsieae</taxon>
        <taxon>Rickettsia</taxon>
        <taxon>typhus group</taxon>
    </lineage>
</organism>
<name>RSMI_RICPR</name>
<comment type="function">
    <text evidence="1">Catalyzes the 2'-O-methylation of the ribose of cytidine 1402 (C1402) in 16S rRNA.</text>
</comment>
<comment type="catalytic activity">
    <reaction evidence="1">
        <text>cytidine(1402) in 16S rRNA + S-adenosyl-L-methionine = 2'-O-methylcytidine(1402) in 16S rRNA + S-adenosyl-L-homocysteine + H(+)</text>
        <dbReference type="Rhea" id="RHEA:42924"/>
        <dbReference type="Rhea" id="RHEA-COMP:10285"/>
        <dbReference type="Rhea" id="RHEA-COMP:10286"/>
        <dbReference type="ChEBI" id="CHEBI:15378"/>
        <dbReference type="ChEBI" id="CHEBI:57856"/>
        <dbReference type="ChEBI" id="CHEBI:59789"/>
        <dbReference type="ChEBI" id="CHEBI:74495"/>
        <dbReference type="ChEBI" id="CHEBI:82748"/>
        <dbReference type="EC" id="2.1.1.198"/>
    </reaction>
</comment>
<comment type="subcellular location">
    <subcellularLocation>
        <location evidence="1">Cytoplasm</location>
    </subcellularLocation>
</comment>
<comment type="similarity">
    <text evidence="1">Belongs to the methyltransferase superfamily. RsmI family.</text>
</comment>
<sequence>MILKSGLYIVSTPIGNFEDITLRAISTLKNSDIILCEDTRISQKLLAKHYIHTKLQIYNDHSDYKDREYIISLIKAGNVVSLISDAGTPLISDPGYKLVRDLRNLNYYIEVVPGVSSPITALTLSSLPTDRFLFSGFLPKTIESKKKIFAELVNLKATLIFFDTASRLINTLLLAKEIFGNREICVARELTKIYQETKTGDIDEIIEFYKNNILKGEIVLLISGNVQVQNKQINLEKFIEFCLSKNLSSKTIIELAYDKFKDVYSKKEIYSVVHKKKFTA</sequence>
<keyword id="KW-0963">Cytoplasm</keyword>
<keyword id="KW-0489">Methyltransferase</keyword>
<keyword id="KW-1185">Reference proteome</keyword>
<keyword id="KW-0698">rRNA processing</keyword>
<keyword id="KW-0949">S-adenosyl-L-methionine</keyword>
<keyword id="KW-0808">Transferase</keyword>
<dbReference type="EC" id="2.1.1.198" evidence="1"/>
<dbReference type="EMBL" id="AJ235273">
    <property type="protein sequence ID" value="CAA15175.1"/>
    <property type="molecule type" value="Genomic_DNA"/>
</dbReference>
<dbReference type="PIR" id="G71634">
    <property type="entry name" value="G71634"/>
</dbReference>
<dbReference type="RefSeq" id="NP_221099.1">
    <property type="nucleotide sequence ID" value="NC_000963.1"/>
</dbReference>
<dbReference type="RefSeq" id="WP_004597008.1">
    <property type="nucleotide sequence ID" value="NC_000963.1"/>
</dbReference>
<dbReference type="SMR" id="Q9ZCJ3"/>
<dbReference type="STRING" id="272947.gene:17555817"/>
<dbReference type="EnsemblBacteria" id="CAA15175">
    <property type="protein sequence ID" value="CAA15175"/>
    <property type="gene ID" value="CAA15175"/>
</dbReference>
<dbReference type="GeneID" id="57569869"/>
<dbReference type="KEGG" id="rpr:RP747"/>
<dbReference type="PATRIC" id="fig|272947.5.peg.781"/>
<dbReference type="eggNOG" id="COG0313">
    <property type="taxonomic scope" value="Bacteria"/>
</dbReference>
<dbReference type="HOGENOM" id="CLU_044779_3_0_5"/>
<dbReference type="OrthoDB" id="9809084at2"/>
<dbReference type="Proteomes" id="UP000002480">
    <property type="component" value="Chromosome"/>
</dbReference>
<dbReference type="GO" id="GO:0005737">
    <property type="term" value="C:cytoplasm"/>
    <property type="evidence" value="ECO:0007669"/>
    <property type="project" value="UniProtKB-SubCell"/>
</dbReference>
<dbReference type="GO" id="GO:0070677">
    <property type="term" value="F:rRNA (cytosine-2'-O-)-methyltransferase activity"/>
    <property type="evidence" value="ECO:0007669"/>
    <property type="project" value="UniProtKB-UniRule"/>
</dbReference>
<dbReference type="CDD" id="cd11648">
    <property type="entry name" value="RsmI"/>
    <property type="match status" value="1"/>
</dbReference>
<dbReference type="FunFam" id="3.30.950.10:FF:000002">
    <property type="entry name" value="Ribosomal RNA small subunit methyltransferase I"/>
    <property type="match status" value="1"/>
</dbReference>
<dbReference type="Gene3D" id="3.40.1010.10">
    <property type="entry name" value="Cobalt-precorrin-4 Transmethylase, Domain 1"/>
    <property type="match status" value="1"/>
</dbReference>
<dbReference type="Gene3D" id="3.30.950.10">
    <property type="entry name" value="Methyltransferase, Cobalt-precorrin-4 Transmethylase, Domain 2"/>
    <property type="match status" value="1"/>
</dbReference>
<dbReference type="HAMAP" id="MF_01877">
    <property type="entry name" value="16SrRNA_methyltr_I"/>
    <property type="match status" value="1"/>
</dbReference>
<dbReference type="InterPro" id="IPR000878">
    <property type="entry name" value="4pyrrol_Mease"/>
</dbReference>
<dbReference type="InterPro" id="IPR035996">
    <property type="entry name" value="4pyrrol_Methylase_sf"/>
</dbReference>
<dbReference type="InterPro" id="IPR014777">
    <property type="entry name" value="4pyrrole_Mease_sub1"/>
</dbReference>
<dbReference type="InterPro" id="IPR014776">
    <property type="entry name" value="4pyrrole_Mease_sub2"/>
</dbReference>
<dbReference type="InterPro" id="IPR008189">
    <property type="entry name" value="rRNA_ssu_MeTfrase_I"/>
</dbReference>
<dbReference type="InterPro" id="IPR018063">
    <property type="entry name" value="SAM_MeTrfase_RsmI_CS"/>
</dbReference>
<dbReference type="NCBIfam" id="TIGR00096">
    <property type="entry name" value="16S rRNA (cytidine(1402)-2'-O)-methyltransferase"/>
    <property type="match status" value="1"/>
</dbReference>
<dbReference type="PANTHER" id="PTHR46111">
    <property type="entry name" value="RIBOSOMAL RNA SMALL SUBUNIT METHYLTRANSFERASE I"/>
    <property type="match status" value="1"/>
</dbReference>
<dbReference type="PANTHER" id="PTHR46111:SF1">
    <property type="entry name" value="RIBOSOMAL RNA SMALL SUBUNIT METHYLTRANSFERASE I"/>
    <property type="match status" value="1"/>
</dbReference>
<dbReference type="Pfam" id="PF00590">
    <property type="entry name" value="TP_methylase"/>
    <property type="match status" value="1"/>
</dbReference>
<dbReference type="PIRSF" id="PIRSF005917">
    <property type="entry name" value="MTase_YraL"/>
    <property type="match status" value="1"/>
</dbReference>
<dbReference type="SUPFAM" id="SSF53790">
    <property type="entry name" value="Tetrapyrrole methylase"/>
    <property type="match status" value="1"/>
</dbReference>
<dbReference type="PROSITE" id="PS01296">
    <property type="entry name" value="RSMI"/>
    <property type="match status" value="1"/>
</dbReference>
<feature type="chain" id="PRO_0000211953" description="Ribosomal RNA small subunit methyltransferase I">
    <location>
        <begin position="1"/>
        <end position="280"/>
    </location>
</feature>
<proteinExistence type="inferred from homology"/>
<gene>
    <name evidence="1" type="primary">rsmI</name>
    <name type="ordered locus">RP747</name>
</gene>
<accession>Q9ZCJ3</accession>
<reference key="1">
    <citation type="journal article" date="1998" name="Nature">
        <title>The genome sequence of Rickettsia prowazekii and the origin of mitochondria.</title>
        <authorList>
            <person name="Andersson S.G.E."/>
            <person name="Zomorodipour A."/>
            <person name="Andersson J.O."/>
            <person name="Sicheritz-Ponten T."/>
            <person name="Alsmark U.C.M."/>
            <person name="Podowski R.M."/>
            <person name="Naeslund A.K."/>
            <person name="Eriksson A.-S."/>
            <person name="Winkler H.H."/>
            <person name="Kurland C.G."/>
        </authorList>
    </citation>
    <scope>NUCLEOTIDE SEQUENCE [LARGE SCALE GENOMIC DNA]</scope>
    <source>
        <strain>Madrid E</strain>
    </source>
</reference>
<protein>
    <recommendedName>
        <fullName evidence="1">Ribosomal RNA small subunit methyltransferase I</fullName>
        <ecNumber evidence="1">2.1.1.198</ecNumber>
    </recommendedName>
    <alternativeName>
        <fullName evidence="1">16S rRNA 2'-O-ribose C1402 methyltransferase</fullName>
    </alternativeName>
    <alternativeName>
        <fullName evidence="1">rRNA (cytidine-2'-O-)-methyltransferase RsmI</fullName>
    </alternativeName>
</protein>